<organism>
    <name type="scientific">Christiangramia forsetii (strain DSM 17595 / CGMCC 1.15422 / KT0803)</name>
    <name type="common">Gramella forsetii</name>
    <dbReference type="NCBI Taxonomy" id="411154"/>
    <lineage>
        <taxon>Bacteria</taxon>
        <taxon>Pseudomonadati</taxon>
        <taxon>Bacteroidota</taxon>
        <taxon>Flavobacteriia</taxon>
        <taxon>Flavobacteriales</taxon>
        <taxon>Flavobacteriaceae</taxon>
        <taxon>Christiangramia</taxon>
    </lineage>
</organism>
<sequence length="285" mass="32511">MHPDNIHKDSYDFEALTESNPQLSEFVFQNKYGTQTINFANPEAVLQLNKALLKFHYQVENWSIPKQYLCPPIPGRADYIHYLNDLLSEENIQGEIRGIDIGVGANAIYPILASRIYDWKMLGTDIEEKSVAIAQANIETNPTIAKNIEIRHQEDRGSIFKGMIKKGEYYHFSICNPPFHASQEEANKATSRKFKNLGLEKGSALNFGGQANELWCNGGEALFIKRMIKESVLFKSQVGYFTSLVSKKENLPKIYKHLNKLKADFKTIEMGQGNKKSRIIAWKFD</sequence>
<dbReference type="EC" id="2.1.1.181" evidence="1"/>
<dbReference type="EMBL" id="CU207366">
    <property type="protein sequence ID" value="CAL67615.1"/>
    <property type="molecule type" value="Genomic_DNA"/>
</dbReference>
<dbReference type="RefSeq" id="WP_011710518.1">
    <property type="nucleotide sequence ID" value="NC_008571.1"/>
</dbReference>
<dbReference type="SMR" id="A0M4S0"/>
<dbReference type="STRING" id="411154.GFO_2659"/>
<dbReference type="KEGG" id="gfo:GFO_2659"/>
<dbReference type="eggNOG" id="COG3129">
    <property type="taxonomic scope" value="Bacteria"/>
</dbReference>
<dbReference type="HOGENOM" id="CLU_027534_3_0_10"/>
<dbReference type="OrthoDB" id="1115728at2"/>
<dbReference type="Proteomes" id="UP000000755">
    <property type="component" value="Chromosome"/>
</dbReference>
<dbReference type="GO" id="GO:0005737">
    <property type="term" value="C:cytoplasm"/>
    <property type="evidence" value="ECO:0007669"/>
    <property type="project" value="UniProtKB-SubCell"/>
</dbReference>
<dbReference type="GO" id="GO:0052907">
    <property type="term" value="F:23S rRNA (adenine(1618)-N(6))-methyltransferase activity"/>
    <property type="evidence" value="ECO:0007669"/>
    <property type="project" value="UniProtKB-EC"/>
</dbReference>
<dbReference type="GO" id="GO:0070475">
    <property type="term" value="P:rRNA base methylation"/>
    <property type="evidence" value="ECO:0007669"/>
    <property type="project" value="TreeGrafter"/>
</dbReference>
<dbReference type="CDD" id="cd02440">
    <property type="entry name" value="AdoMet_MTases"/>
    <property type="match status" value="1"/>
</dbReference>
<dbReference type="Gene3D" id="3.40.50.150">
    <property type="entry name" value="Vaccinia Virus protein VP39"/>
    <property type="match status" value="1"/>
</dbReference>
<dbReference type="HAMAP" id="MF_01848">
    <property type="entry name" value="23SrRNA_methyltr_F"/>
    <property type="match status" value="1"/>
</dbReference>
<dbReference type="InterPro" id="IPR010286">
    <property type="entry name" value="METTL16/RlmF"/>
</dbReference>
<dbReference type="InterPro" id="IPR016909">
    <property type="entry name" value="rRNA_lsu_MeTfrase_F"/>
</dbReference>
<dbReference type="InterPro" id="IPR029063">
    <property type="entry name" value="SAM-dependent_MTases_sf"/>
</dbReference>
<dbReference type="NCBIfam" id="NF008725">
    <property type="entry name" value="PRK11727.1"/>
    <property type="match status" value="1"/>
</dbReference>
<dbReference type="PANTHER" id="PTHR13393:SF0">
    <property type="entry name" value="RNA N6-ADENOSINE-METHYLTRANSFERASE METTL16"/>
    <property type="match status" value="1"/>
</dbReference>
<dbReference type="PANTHER" id="PTHR13393">
    <property type="entry name" value="SAM-DEPENDENT METHYLTRANSFERASE"/>
    <property type="match status" value="1"/>
</dbReference>
<dbReference type="Pfam" id="PF05971">
    <property type="entry name" value="Methyltransf_10"/>
    <property type="match status" value="1"/>
</dbReference>
<dbReference type="PIRSF" id="PIRSF029038">
    <property type="entry name" value="Mtase_YbiN_prd"/>
    <property type="match status" value="1"/>
</dbReference>
<dbReference type="SUPFAM" id="SSF53335">
    <property type="entry name" value="S-adenosyl-L-methionine-dependent methyltransferases"/>
    <property type="match status" value="1"/>
</dbReference>
<feature type="chain" id="PRO_0000349918" description="Ribosomal RNA large subunit methyltransferase F">
    <location>
        <begin position="1"/>
        <end position="285"/>
    </location>
</feature>
<accession>A0M4S0</accession>
<keyword id="KW-0963">Cytoplasm</keyword>
<keyword id="KW-0489">Methyltransferase</keyword>
<keyword id="KW-0698">rRNA processing</keyword>
<keyword id="KW-0949">S-adenosyl-L-methionine</keyword>
<keyword id="KW-0808">Transferase</keyword>
<comment type="function">
    <text evidence="1">Specifically methylates the adenine in position 1618 of 23S rRNA.</text>
</comment>
<comment type="catalytic activity">
    <reaction evidence="1">
        <text>adenosine(1618) in 23S rRNA + S-adenosyl-L-methionine = N(6)-methyladenosine(1618) in 23S rRNA + S-adenosyl-L-homocysteine + H(+)</text>
        <dbReference type="Rhea" id="RHEA:16497"/>
        <dbReference type="Rhea" id="RHEA-COMP:10229"/>
        <dbReference type="Rhea" id="RHEA-COMP:10231"/>
        <dbReference type="ChEBI" id="CHEBI:15378"/>
        <dbReference type="ChEBI" id="CHEBI:57856"/>
        <dbReference type="ChEBI" id="CHEBI:59789"/>
        <dbReference type="ChEBI" id="CHEBI:74411"/>
        <dbReference type="ChEBI" id="CHEBI:74449"/>
        <dbReference type="EC" id="2.1.1.181"/>
    </reaction>
</comment>
<comment type="subcellular location">
    <subcellularLocation>
        <location evidence="1">Cytoplasm</location>
    </subcellularLocation>
</comment>
<comment type="similarity">
    <text evidence="1">Belongs to the methyltransferase superfamily. METTL16/RlmF family.</text>
</comment>
<gene>
    <name evidence="1" type="primary">rlmF</name>
    <name type="ordered locus">GFO_2659</name>
</gene>
<proteinExistence type="inferred from homology"/>
<evidence type="ECO:0000255" key="1">
    <source>
        <dbReference type="HAMAP-Rule" id="MF_01848"/>
    </source>
</evidence>
<reference key="1">
    <citation type="journal article" date="2006" name="Environ. Microbiol.">
        <title>Whole genome analysis of the marine Bacteroidetes'Gramella forsetii' reveals adaptations to degradation of polymeric organic matter.</title>
        <authorList>
            <person name="Bauer M."/>
            <person name="Kube M."/>
            <person name="Teeling H."/>
            <person name="Richter M."/>
            <person name="Lombardot T."/>
            <person name="Allers E."/>
            <person name="Wuerdemann C.A."/>
            <person name="Quast C."/>
            <person name="Kuhl H."/>
            <person name="Knaust F."/>
            <person name="Woebken D."/>
            <person name="Bischof K."/>
            <person name="Mussmann M."/>
            <person name="Choudhuri J.V."/>
            <person name="Meyer F."/>
            <person name="Reinhardt R."/>
            <person name="Amann R.I."/>
            <person name="Gloeckner F.O."/>
        </authorList>
    </citation>
    <scope>NUCLEOTIDE SEQUENCE [LARGE SCALE GENOMIC DNA]</scope>
    <source>
        <strain>DSM 17595 / CGMCC 1.15422 / KT0803</strain>
    </source>
</reference>
<protein>
    <recommendedName>
        <fullName evidence="1">Ribosomal RNA large subunit methyltransferase F</fullName>
        <ecNumber evidence="1">2.1.1.181</ecNumber>
    </recommendedName>
    <alternativeName>
        <fullName evidence="1">23S rRNA mA1618 methyltransferase</fullName>
    </alternativeName>
    <alternativeName>
        <fullName evidence="1">rRNA adenine N-6-methyltransferase</fullName>
    </alternativeName>
</protein>
<name>RLMF_CHRFK</name>